<protein>
    <recommendedName>
        <fullName evidence="1">Phosphomethylpyrimidine synthase</fullName>
        <ecNumber evidence="1">4.1.99.17</ecNumber>
    </recommendedName>
    <alternativeName>
        <fullName evidence="1">Hydroxymethylpyrimidine phosphate synthase</fullName>
        <shortName evidence="1">HMP-P synthase</shortName>
        <shortName evidence="1">HMP-phosphate synthase</shortName>
        <shortName evidence="1">HMPP synthase</shortName>
    </alternativeName>
    <alternativeName>
        <fullName evidence="1">Thiamine biosynthesis protein ThiC</fullName>
    </alternativeName>
</protein>
<sequence>MSIRKQARLEAKQFIDSLTVQPFPNSQKVYVQGSRADIQVPMREISLADSLVGGSKKAPILEPNEPIRVYDTSGFYTDPNQPVNIYDGLEKVRSGWIEERGDTVLLEQSNSVYTKERLSDETLDELRFDARIQARQAVEGHCVTQLHYARKGIVTPEMEYIAIRENMGRAKYADEELNQQHPGINFGANLPPEITPEFVRKEVAEGRAIIPANINHPESEPMIIGRNFLVKVNANIGNSAVSSSIEEEVEKLVWSIRWGGDTVMDLSTGRNIHETREWIIRNSPVPIGTVPMYQALEKVNGVAENLNWDVFRDTLLEQAEQGVDYFTIHAGVLLRYVPMTAKRVTGIVSRGGSIMAKWCLAHHEESFLYMHFREICEICAQYDISLSLGDGLRPGSVADANDEAQFSELRTLGELTKIAWEYDVQVMIEGPGHVPMHMIKENMDEQLKHCHEAPFYTLGPLTTDIAPGYDHITSGIGAAIIGWYGCAMLCYVTPKEHLGLPNKDDVKVGLITYKLCAHAADLAKGHPGAQVRDNALSKARFEFRWEDQFNLGLDPDTARAYHDETLPQESGKVAHFCSMCGPKFCSMKISQEVRDYAKGLEENGDIAIKLLDNPLEGMQQKSDEFRSRGSELYHPVQEEI</sequence>
<name>THIC_PHOPR</name>
<organism>
    <name type="scientific">Photobacterium profundum (strain SS9)</name>
    <dbReference type="NCBI Taxonomy" id="298386"/>
    <lineage>
        <taxon>Bacteria</taxon>
        <taxon>Pseudomonadati</taxon>
        <taxon>Pseudomonadota</taxon>
        <taxon>Gammaproteobacteria</taxon>
        <taxon>Vibrionales</taxon>
        <taxon>Vibrionaceae</taxon>
        <taxon>Photobacterium</taxon>
    </lineage>
</organism>
<gene>
    <name evidence="1" type="primary">thiC</name>
    <name type="ordered locus">PBPRA0106</name>
</gene>
<keyword id="KW-0004">4Fe-4S</keyword>
<keyword id="KW-0408">Iron</keyword>
<keyword id="KW-0411">Iron-sulfur</keyword>
<keyword id="KW-0456">Lyase</keyword>
<keyword id="KW-0479">Metal-binding</keyword>
<keyword id="KW-1185">Reference proteome</keyword>
<keyword id="KW-0949">S-adenosyl-L-methionine</keyword>
<keyword id="KW-0784">Thiamine biosynthesis</keyword>
<keyword id="KW-0862">Zinc</keyword>
<comment type="function">
    <text evidence="1">Catalyzes the synthesis of the hydroxymethylpyrimidine phosphate (HMP-P) moiety of thiamine from aminoimidazole ribotide (AIR) in a radical S-adenosyl-L-methionine (SAM)-dependent reaction.</text>
</comment>
<comment type="catalytic activity">
    <reaction evidence="1">
        <text>5-amino-1-(5-phospho-beta-D-ribosyl)imidazole + S-adenosyl-L-methionine = 4-amino-2-methyl-5-(phosphooxymethyl)pyrimidine + CO + 5'-deoxyadenosine + formate + L-methionine + 3 H(+)</text>
        <dbReference type="Rhea" id="RHEA:24840"/>
        <dbReference type="ChEBI" id="CHEBI:15378"/>
        <dbReference type="ChEBI" id="CHEBI:15740"/>
        <dbReference type="ChEBI" id="CHEBI:17245"/>
        <dbReference type="ChEBI" id="CHEBI:17319"/>
        <dbReference type="ChEBI" id="CHEBI:57844"/>
        <dbReference type="ChEBI" id="CHEBI:58354"/>
        <dbReference type="ChEBI" id="CHEBI:59789"/>
        <dbReference type="ChEBI" id="CHEBI:137981"/>
        <dbReference type="EC" id="4.1.99.17"/>
    </reaction>
</comment>
<comment type="cofactor">
    <cofactor evidence="1">
        <name>[4Fe-4S] cluster</name>
        <dbReference type="ChEBI" id="CHEBI:49883"/>
    </cofactor>
    <text evidence="1">Binds 1 [4Fe-4S] cluster per subunit. The cluster is coordinated with 3 cysteines and an exchangeable S-adenosyl-L-methionine.</text>
</comment>
<comment type="pathway">
    <text evidence="1">Cofactor biosynthesis; thiamine diphosphate biosynthesis.</text>
</comment>
<comment type="subunit">
    <text evidence="1">Homodimer.</text>
</comment>
<comment type="similarity">
    <text evidence="1">Belongs to the ThiC family.</text>
</comment>
<accession>Q6LVY0</accession>
<reference key="1">
    <citation type="journal article" date="2005" name="Science">
        <title>Life at depth: Photobacterium profundum genome sequence and expression analysis.</title>
        <authorList>
            <person name="Vezzi A."/>
            <person name="Campanaro S."/>
            <person name="D'Angelo M."/>
            <person name="Simonato F."/>
            <person name="Vitulo N."/>
            <person name="Lauro F.M."/>
            <person name="Cestaro A."/>
            <person name="Malacrida G."/>
            <person name="Simionati B."/>
            <person name="Cannata N."/>
            <person name="Romualdi C."/>
            <person name="Bartlett D.H."/>
            <person name="Valle G."/>
        </authorList>
    </citation>
    <scope>NUCLEOTIDE SEQUENCE [LARGE SCALE GENOMIC DNA]</scope>
    <source>
        <strain>ATCC BAA-1253 / SS9</strain>
    </source>
</reference>
<evidence type="ECO:0000255" key="1">
    <source>
        <dbReference type="HAMAP-Rule" id="MF_00089"/>
    </source>
</evidence>
<proteinExistence type="inferred from homology"/>
<dbReference type="EC" id="4.1.99.17" evidence="1"/>
<dbReference type="EMBL" id="CR378663">
    <property type="protein sequence ID" value="CAG18545.1"/>
    <property type="molecule type" value="Genomic_DNA"/>
</dbReference>
<dbReference type="RefSeq" id="WP_011216923.1">
    <property type="nucleotide sequence ID" value="NC_006370.1"/>
</dbReference>
<dbReference type="SMR" id="Q6LVY0"/>
<dbReference type="STRING" id="298386.PBPRA0106"/>
<dbReference type="KEGG" id="ppr:PBPRA0106"/>
<dbReference type="eggNOG" id="COG0422">
    <property type="taxonomic scope" value="Bacteria"/>
</dbReference>
<dbReference type="HOGENOM" id="CLU_013181_2_1_6"/>
<dbReference type="UniPathway" id="UPA00060"/>
<dbReference type="Proteomes" id="UP000000593">
    <property type="component" value="Chromosome 1"/>
</dbReference>
<dbReference type="GO" id="GO:0005829">
    <property type="term" value="C:cytosol"/>
    <property type="evidence" value="ECO:0007669"/>
    <property type="project" value="TreeGrafter"/>
</dbReference>
<dbReference type="GO" id="GO:0051539">
    <property type="term" value="F:4 iron, 4 sulfur cluster binding"/>
    <property type="evidence" value="ECO:0007669"/>
    <property type="project" value="UniProtKB-KW"/>
</dbReference>
<dbReference type="GO" id="GO:0016830">
    <property type="term" value="F:carbon-carbon lyase activity"/>
    <property type="evidence" value="ECO:0007669"/>
    <property type="project" value="InterPro"/>
</dbReference>
<dbReference type="GO" id="GO:0008270">
    <property type="term" value="F:zinc ion binding"/>
    <property type="evidence" value="ECO:0007669"/>
    <property type="project" value="UniProtKB-UniRule"/>
</dbReference>
<dbReference type="GO" id="GO:0009228">
    <property type="term" value="P:thiamine biosynthetic process"/>
    <property type="evidence" value="ECO:0007669"/>
    <property type="project" value="UniProtKB-KW"/>
</dbReference>
<dbReference type="GO" id="GO:0009229">
    <property type="term" value="P:thiamine diphosphate biosynthetic process"/>
    <property type="evidence" value="ECO:0007669"/>
    <property type="project" value="UniProtKB-UniRule"/>
</dbReference>
<dbReference type="FunFam" id="3.20.20.540:FF:000001">
    <property type="entry name" value="Phosphomethylpyrimidine synthase"/>
    <property type="match status" value="1"/>
</dbReference>
<dbReference type="Gene3D" id="6.10.250.620">
    <property type="match status" value="1"/>
</dbReference>
<dbReference type="Gene3D" id="3.20.20.540">
    <property type="entry name" value="Radical SAM ThiC family, central domain"/>
    <property type="match status" value="1"/>
</dbReference>
<dbReference type="HAMAP" id="MF_00089">
    <property type="entry name" value="ThiC"/>
    <property type="match status" value="1"/>
</dbReference>
<dbReference type="InterPro" id="IPR037509">
    <property type="entry name" value="ThiC"/>
</dbReference>
<dbReference type="InterPro" id="IPR025747">
    <property type="entry name" value="ThiC-associated_dom"/>
</dbReference>
<dbReference type="InterPro" id="IPR038521">
    <property type="entry name" value="ThiC/Bza_core_dom"/>
</dbReference>
<dbReference type="InterPro" id="IPR002817">
    <property type="entry name" value="ThiC/BzaA/B"/>
</dbReference>
<dbReference type="NCBIfam" id="NF006763">
    <property type="entry name" value="PRK09284.1"/>
    <property type="match status" value="1"/>
</dbReference>
<dbReference type="NCBIfam" id="NF009895">
    <property type="entry name" value="PRK13352.1"/>
    <property type="match status" value="1"/>
</dbReference>
<dbReference type="NCBIfam" id="TIGR00190">
    <property type="entry name" value="thiC"/>
    <property type="match status" value="1"/>
</dbReference>
<dbReference type="PANTHER" id="PTHR30557:SF1">
    <property type="entry name" value="PHOSPHOMETHYLPYRIMIDINE SYNTHASE, CHLOROPLASTIC"/>
    <property type="match status" value="1"/>
</dbReference>
<dbReference type="PANTHER" id="PTHR30557">
    <property type="entry name" value="THIAMINE BIOSYNTHESIS PROTEIN THIC"/>
    <property type="match status" value="1"/>
</dbReference>
<dbReference type="Pfam" id="PF13667">
    <property type="entry name" value="ThiC-associated"/>
    <property type="match status" value="1"/>
</dbReference>
<dbReference type="Pfam" id="PF01964">
    <property type="entry name" value="ThiC_Rad_SAM"/>
    <property type="match status" value="1"/>
</dbReference>
<dbReference type="SFLD" id="SFLDF00407">
    <property type="entry name" value="phosphomethylpyrimidine_syntha"/>
    <property type="match status" value="1"/>
</dbReference>
<dbReference type="SFLD" id="SFLDG01114">
    <property type="entry name" value="phosphomethylpyrimidine_syntha"/>
    <property type="match status" value="1"/>
</dbReference>
<dbReference type="SFLD" id="SFLDS00113">
    <property type="entry name" value="Radical_SAM_Phosphomethylpyrim"/>
    <property type="match status" value="1"/>
</dbReference>
<feature type="chain" id="PRO_0000242284" description="Phosphomethylpyrimidine synthase">
    <location>
        <begin position="1"/>
        <end position="640"/>
    </location>
</feature>
<feature type="binding site" evidence="1">
    <location>
        <position position="235"/>
    </location>
    <ligand>
        <name>substrate</name>
    </ligand>
</feature>
<feature type="binding site" evidence="1">
    <location>
        <position position="264"/>
    </location>
    <ligand>
        <name>substrate</name>
    </ligand>
</feature>
<feature type="binding site" evidence="1">
    <location>
        <position position="293"/>
    </location>
    <ligand>
        <name>substrate</name>
    </ligand>
</feature>
<feature type="binding site" evidence="1">
    <location>
        <position position="329"/>
    </location>
    <ligand>
        <name>substrate</name>
    </ligand>
</feature>
<feature type="binding site" evidence="1">
    <location>
        <begin position="349"/>
        <end position="351"/>
    </location>
    <ligand>
        <name>substrate</name>
    </ligand>
</feature>
<feature type="binding site" evidence="1">
    <location>
        <begin position="390"/>
        <end position="393"/>
    </location>
    <ligand>
        <name>substrate</name>
    </ligand>
</feature>
<feature type="binding site" evidence="1">
    <location>
        <position position="429"/>
    </location>
    <ligand>
        <name>substrate</name>
    </ligand>
</feature>
<feature type="binding site" evidence="1">
    <location>
        <position position="433"/>
    </location>
    <ligand>
        <name>Zn(2+)</name>
        <dbReference type="ChEBI" id="CHEBI:29105"/>
    </ligand>
</feature>
<feature type="binding site" evidence="1">
    <location>
        <position position="456"/>
    </location>
    <ligand>
        <name>substrate</name>
    </ligand>
</feature>
<feature type="binding site" evidence="1">
    <location>
        <position position="497"/>
    </location>
    <ligand>
        <name>Zn(2+)</name>
        <dbReference type="ChEBI" id="CHEBI:29105"/>
    </ligand>
</feature>
<feature type="binding site" evidence="1">
    <location>
        <position position="577"/>
    </location>
    <ligand>
        <name>[4Fe-4S] cluster</name>
        <dbReference type="ChEBI" id="CHEBI:49883"/>
        <note>4Fe-4S-S-AdoMet</note>
    </ligand>
</feature>
<feature type="binding site" evidence="1">
    <location>
        <position position="580"/>
    </location>
    <ligand>
        <name>[4Fe-4S] cluster</name>
        <dbReference type="ChEBI" id="CHEBI:49883"/>
        <note>4Fe-4S-S-AdoMet</note>
    </ligand>
</feature>
<feature type="binding site" evidence="1">
    <location>
        <position position="585"/>
    </location>
    <ligand>
        <name>[4Fe-4S] cluster</name>
        <dbReference type="ChEBI" id="CHEBI:49883"/>
        <note>4Fe-4S-S-AdoMet</note>
    </ligand>
</feature>